<accession>P62504</accession>
<accession>Q6PHU3</accession>
<accession>Q6Y5H4</accession>
<name>S10AA_MACMU</name>
<keyword id="KW-0007">Acetylation</keyword>
<keyword id="KW-1017">Isopeptide bond</keyword>
<keyword id="KW-1185">Reference proteome</keyword>
<keyword id="KW-0832">Ubl conjugation</keyword>
<feature type="chain" id="PRO_0000144003" description="Protein S100-A10">
    <location>
        <begin position="1"/>
        <end position="97"/>
    </location>
</feature>
<feature type="region of interest" description="Ancestral calcium site">
    <location>
        <begin position="60"/>
        <end position="71"/>
    </location>
</feature>
<feature type="modified residue" description="N6-acetyllysine" evidence="4">
    <location>
        <position position="23"/>
    </location>
</feature>
<feature type="modified residue" description="N6-acetyllysine" evidence="4">
    <location>
        <position position="28"/>
    </location>
</feature>
<feature type="modified residue" description="N6-acetyllysine; alternate" evidence="4">
    <location>
        <position position="37"/>
    </location>
</feature>
<feature type="modified residue" description="N6-acetyllysine" evidence="4">
    <location>
        <position position="54"/>
    </location>
</feature>
<feature type="modified residue" description="N6-acetyllysine" evidence="4">
    <location>
        <position position="57"/>
    </location>
</feature>
<feature type="cross-link" description="Glycyl lysine isopeptide (Lys-Gly) (interchain with G-Cter in SUMO2); alternate" evidence="4">
    <location>
        <position position="37"/>
    </location>
</feature>
<gene>
    <name type="primary">S100A10</name>
    <name type="synonym">CAL1L</name>
</gene>
<proteinExistence type="inferred from homology"/>
<evidence type="ECO:0000250" key="1"/>
<evidence type="ECO:0000250" key="2">
    <source>
        <dbReference type="UniProtKB" id="P05943"/>
    </source>
</evidence>
<evidence type="ECO:0000250" key="3">
    <source>
        <dbReference type="UniProtKB" id="P08207"/>
    </source>
</evidence>
<evidence type="ECO:0000250" key="4">
    <source>
        <dbReference type="UniProtKB" id="P60903"/>
    </source>
</evidence>
<evidence type="ECO:0000305" key="5"/>
<reference key="1">
    <citation type="submission" date="2002-11" db="EMBL/GenBank/DDBJ databases">
        <title>Molecular cloning of genes critical to embryo implantation from Rhesus monkey by suppression subtractive hybridization.</title>
        <authorList>
            <person name="Sun X.-Y."/>
            <person name="Tan Y.-F."/>
            <person name="Qin L."/>
            <person name="Bai S.-X."/>
            <person name="Li F.-X."/>
            <person name="Qiu W."/>
            <person name="Piao Y.-S."/>
            <person name="Wang Y.-L."/>
        </authorList>
    </citation>
    <scope>NUCLEOTIDE SEQUENCE [MRNA]</scope>
</reference>
<comment type="function">
    <text evidence="1">Because S100A10 induces the dimerization of ANXA2/p36, it may function as a regulator of protein phosphorylation in that the ANXA2 monomer is the preferred target (in vitro) of tyrosine-specific kinase.</text>
</comment>
<comment type="subunit">
    <text evidence="2 3 4">Heterotetramer containing 2 light chains of S100A10/p11 and 2 heavy chains of ANXA2/p36 (By similarity). Interacts with SCN10A (By similarity). Interacts with TASOR (By similarity).</text>
</comment>
<comment type="miscellaneous">
    <text>Does not appear to bind calcium. Contains 2 ancestral calcium site related to EF-hand domains that have lost their ability to bind calcium.</text>
</comment>
<comment type="similarity">
    <text evidence="5">Belongs to the S-100 family.</text>
</comment>
<dbReference type="EMBL" id="AY179865">
    <property type="protein sequence ID" value="AAO21200.1"/>
    <property type="molecule type" value="mRNA"/>
</dbReference>
<dbReference type="RefSeq" id="NP_001028124.1">
    <property type="nucleotide sequence ID" value="NM_001032952.3"/>
</dbReference>
<dbReference type="RefSeq" id="NP_001265347.1">
    <property type="nucleotide sequence ID" value="NM_001278418.1"/>
</dbReference>
<dbReference type="RefSeq" id="XP_015005957.1">
    <property type="nucleotide sequence ID" value="XM_015150471.2"/>
</dbReference>
<dbReference type="RefSeq" id="XP_015005963.1">
    <property type="nucleotide sequence ID" value="XM_015150477.1"/>
</dbReference>
<dbReference type="RefSeq" id="XP_015005974.1">
    <property type="nucleotide sequence ID" value="XM_015150488.2"/>
</dbReference>
<dbReference type="SMR" id="P62504"/>
<dbReference type="FunCoup" id="P62504">
    <property type="interactions" value="227"/>
</dbReference>
<dbReference type="STRING" id="9544.ENSMMUP00000066688"/>
<dbReference type="PaxDb" id="9544-ENSMMUP00000039024"/>
<dbReference type="Ensembl" id="ENSMMUT00000090627.1">
    <property type="protein sequence ID" value="ENSMMUP00000072967.1"/>
    <property type="gene ID" value="ENSMMUG00000052533.1"/>
</dbReference>
<dbReference type="GeneID" id="574374"/>
<dbReference type="KEGG" id="mcc:574374"/>
<dbReference type="CTD" id="6281"/>
<dbReference type="VEuPathDB" id="HostDB:ENSMMUG00000052533"/>
<dbReference type="VGNC" id="VGNC:106491">
    <property type="gene designation" value="S100A10"/>
</dbReference>
<dbReference type="eggNOG" id="ENOG502S6TB">
    <property type="taxonomic scope" value="Eukaryota"/>
</dbReference>
<dbReference type="GeneTree" id="ENSGT00940000154197"/>
<dbReference type="HOGENOM" id="CLU_138624_2_1_1"/>
<dbReference type="InParanoid" id="P62504"/>
<dbReference type="OMA" id="WGSRGQE"/>
<dbReference type="OrthoDB" id="26525at2759"/>
<dbReference type="TreeFam" id="TF332727"/>
<dbReference type="Proteomes" id="UP000006718">
    <property type="component" value="Chromosome 1"/>
</dbReference>
<dbReference type="Bgee" id="ENSMMUG00000052533">
    <property type="expression patterns" value="Expressed in lung and 23 other cell types or tissues"/>
</dbReference>
<dbReference type="ExpressionAtlas" id="P62504">
    <property type="expression patterns" value="baseline"/>
</dbReference>
<dbReference type="GO" id="GO:0005737">
    <property type="term" value="C:cytoplasm"/>
    <property type="evidence" value="ECO:0000318"/>
    <property type="project" value="GO_Central"/>
</dbReference>
<dbReference type="GO" id="GO:0005509">
    <property type="term" value="F:calcium ion binding"/>
    <property type="evidence" value="ECO:0000318"/>
    <property type="project" value="GO_Central"/>
</dbReference>
<dbReference type="GO" id="GO:0048306">
    <property type="term" value="F:calcium-dependent protein binding"/>
    <property type="evidence" value="ECO:0000318"/>
    <property type="project" value="GO_Central"/>
</dbReference>
<dbReference type="GO" id="GO:0044325">
    <property type="term" value="F:transmembrane transporter binding"/>
    <property type="evidence" value="ECO:0000318"/>
    <property type="project" value="GO_Central"/>
</dbReference>
<dbReference type="CDD" id="cd05024">
    <property type="entry name" value="S-100A10"/>
    <property type="match status" value="1"/>
</dbReference>
<dbReference type="FunFam" id="1.10.238.10:FF:000167">
    <property type="entry name" value="Protein S100-A10"/>
    <property type="match status" value="1"/>
</dbReference>
<dbReference type="Gene3D" id="1.10.238.10">
    <property type="entry name" value="EF-hand"/>
    <property type="match status" value="1"/>
</dbReference>
<dbReference type="InterPro" id="IPR011992">
    <property type="entry name" value="EF-hand-dom_pair"/>
</dbReference>
<dbReference type="InterPro" id="IPR028476">
    <property type="entry name" value="S100-A10"/>
</dbReference>
<dbReference type="InterPro" id="IPR001751">
    <property type="entry name" value="S100/CaBP7/8-like_CS"/>
</dbReference>
<dbReference type="InterPro" id="IPR013787">
    <property type="entry name" value="S100_Ca-bd_sub"/>
</dbReference>
<dbReference type="PANTHER" id="PTHR11639:SF74">
    <property type="entry name" value="PROTEIN S100-A10"/>
    <property type="match status" value="1"/>
</dbReference>
<dbReference type="PANTHER" id="PTHR11639">
    <property type="entry name" value="S100 CALCIUM-BINDING PROTEIN"/>
    <property type="match status" value="1"/>
</dbReference>
<dbReference type="Pfam" id="PF01023">
    <property type="entry name" value="S_100"/>
    <property type="match status" value="1"/>
</dbReference>
<dbReference type="SMART" id="SM01394">
    <property type="entry name" value="S_100"/>
    <property type="match status" value="1"/>
</dbReference>
<dbReference type="SUPFAM" id="SSF47473">
    <property type="entry name" value="EF-hand"/>
    <property type="match status" value="1"/>
</dbReference>
<dbReference type="PROSITE" id="PS00303">
    <property type="entry name" value="S100_CABP"/>
    <property type="match status" value="1"/>
</dbReference>
<organism>
    <name type="scientific">Macaca mulatta</name>
    <name type="common">Rhesus macaque</name>
    <dbReference type="NCBI Taxonomy" id="9544"/>
    <lineage>
        <taxon>Eukaryota</taxon>
        <taxon>Metazoa</taxon>
        <taxon>Chordata</taxon>
        <taxon>Craniata</taxon>
        <taxon>Vertebrata</taxon>
        <taxon>Euteleostomi</taxon>
        <taxon>Mammalia</taxon>
        <taxon>Eutheria</taxon>
        <taxon>Euarchontoglires</taxon>
        <taxon>Primates</taxon>
        <taxon>Haplorrhini</taxon>
        <taxon>Catarrhini</taxon>
        <taxon>Cercopithecidae</taxon>
        <taxon>Cercopithecinae</taxon>
        <taxon>Macaca</taxon>
    </lineage>
</organism>
<sequence>MPSQMEHAMETMMFTFHKFAGDKGYLTKEDLRVLMEKEFPGFLENQKDPLAVDKIMKDLDQCRDGKVGFQSFFSLIAGLTIACNDYFVVHMKQKGKK</sequence>
<protein>
    <recommendedName>
        <fullName>Protein S100-A10</fullName>
    </recommendedName>
    <alternativeName>
        <fullName>Calpactin I light chain</fullName>
    </alternativeName>
    <alternativeName>
        <fullName>Calpactin-1 light chain</fullName>
    </alternativeName>
    <alternativeName>
        <fullName>S100 calcium-binding protein A10</fullName>
    </alternativeName>
</protein>